<reference key="1">
    <citation type="journal article" date="2001" name="Vaccine">
        <title>Mutation of rubella virus vaccine TO-336 strain occurred in the attenuation process of wild progenitor virus.</title>
        <authorList>
            <person name="Kakizawa J."/>
            <person name="Nitta Y."/>
            <person name="Yamashita T."/>
            <person name="Ushijima H."/>
            <person name="Katow S."/>
        </authorList>
    </citation>
    <scope>NUCLEOTIDE SEQUENCE [GENOMIC RNA]</scope>
</reference>
<comment type="function">
    <molecule>Capsid protein</molecule>
    <text evidence="3">Capsid protein interacts with genomic RNA and assembles into icosahedric core particles 65-70 nm in diameter. The resulting nucleocapsid eventually associates with the cytoplasmic domain of E2 at the cell membrane, leading to budding and formation of mature virions from host Golgi membranes. Phosphorylation negatively regulates RNA-binding activity, possibly delaying virion assembly during the viral replication phase. Capsid protein dimerizes and becomes disulfide-linked in the virion. Modulates genomic RNA replication. Modulates subgenomic RNA synthesis by interacting with human C1QBP/SF2P32. Induces both perinuclear clustering of mitochondria and the formation of electron-dense intermitochondrial plaques, both hallmarks of rubella virus infected cells. Induces apoptosis when expressed in transfected cells.</text>
</comment>
<comment type="function">
    <molecule>Spike glycoprotein E2</molecule>
    <text evidence="3">Responsible for viral attachment to target host cell, by binding to the cell receptor. Its transport to the plasma membrane depends on interaction with E1 protein. The surface glycoproteins display an irregular helical organization and a pseudo-tetrameric inner nucleocapsid arrangement.</text>
</comment>
<comment type="function">
    <molecule>Spike glycoprotein E1</molecule>
    <text evidence="2 3">Class II viral fusion protein (By similarity). Fusion activity is inactive as long as E1 is bound to E2 in mature virion. After virus attachment to target cell and clathrin-mediated endocytosis, acidification of the endosome would induce dissociation of E1/E2 heterodimer and concomitant trimerization of the E1 subunits (By similarity). This E1 homotrimer is fusion active, and promotes release of viral nucleocapsid in cytoplasm after endosome and viral membrane fusion. The cytoplasmic tail of spike glycoprotein E1 modulates virus release. The surface glycoproteins display an irregular helical organization and a pseudo-tetrameric inner nucleocapsid arrangement (By similarity).</text>
</comment>
<comment type="subunit">
    <molecule>Capsid protein</molecule>
    <text evidence="3">Homodimer; further assembles into homooligomer. Interacts with human C1QBP. Interacts (via N-terminus) with protease/methyltransferase p150.</text>
</comment>
<comment type="subunit">
    <molecule>Spike glycoprotein E1</molecule>
    <text evidence="3">Heterodimer with spike glycoprotein E2.</text>
</comment>
<comment type="subunit">
    <molecule>Spike glycoprotein E2</molecule>
    <text evidence="3">Heterodimer with spike glycoprotein E1.</text>
</comment>
<comment type="subcellular location">
    <molecule>Capsid protein</molecule>
    <subcellularLocation>
        <location evidence="3">Virion</location>
    </subcellularLocation>
    <subcellularLocation>
        <location>Host cytoplasm</location>
    </subcellularLocation>
    <subcellularLocation>
        <location evidence="3">Host mitochondrion</location>
    </subcellularLocation>
    <text evidence="3">The capsid protein is concentrated around Golgi region (By similarity). In the virion, it is probably associated to the viral membrane (By similarity).</text>
</comment>
<comment type="subcellular location">
    <molecule>Spike glycoprotein E2</molecule>
    <subcellularLocation>
        <location evidence="3">Virion membrane</location>
        <topology evidence="3">Single-pass type I membrane protein</topology>
    </subcellularLocation>
    <subcellularLocation>
        <location evidence="3">Host Golgi apparatus membrane</location>
        <topology evidence="3">Single-pass type I membrane protein</topology>
    </subcellularLocation>
    <text evidence="3">E1 and E2 form heterodimer in the endoplasmic reticulum before they are transported to and retained in the Golgi complex, where virus assembly occurs. E1 possesses an endoplasmic reticulum retention signal, and unassembled E2 and E1 subunits are retained in the endoplasmic reticulum. Presumably, assembly of E2 and E1 would mask the signal, thereby allowing transport of the heterodimer to the Golgi complex.</text>
</comment>
<comment type="subcellular location">
    <molecule>Spike glycoprotein E1</molecule>
    <subcellularLocation>
        <location evidence="3">Virion membrane</location>
        <topology evidence="3">Single-pass type I membrane protein</topology>
    </subcellularLocation>
    <subcellularLocation>
        <location evidence="3">Host Golgi apparatus membrane</location>
        <topology evidence="3">Single-pass type I membrane protein</topology>
    </subcellularLocation>
    <text evidence="3">E1 and E2 form heterodimer in the endoplasmic reticulum before they are transported to and retained in the Golgi complex, where virus assembly occurs. E1 possesses an endoplasmic reticulum retention signal, and unassembled E2 and E1 subunits are retained in the endoplasmic reticulum. Presumably, assembly of E2 and E1 would mask the signal, thereby allowing transport of the heterodimer to the Golgi complex.</text>
</comment>
<comment type="domain">
    <text evidence="3">Structural polyprotein: Contains two internal signal peptides that are necessary for directing translocation of the glycoproteins into the lumen of the endoplasmic reticulum.</text>
</comment>
<comment type="domain">
    <molecule>Capsid protein</molecule>
    <text evidence="3">The capsid protein is probably attached to the viral membrane through the E2 signal peptide. This domain is also required for the localization of the capsid protein to the juxtanuclear region and subsequent virus assembly at the Golgi complex.</text>
</comment>
<comment type="PTM">
    <text evidence="3">Structural polyprotein: Specific enzymatic cleavages in vivo yield mature proteins. Two signal peptidase-mediated cleavages within the polyprotein produce the structural proteins capsid, E2, and E1. The E2 signal peptide remains attached to the C-terminus of the capsid protein after cleavage by the signal peptidase. Another signal peptide at E2 C-terminus directs E1 to the ER, with a similar mechanism.</text>
</comment>
<comment type="PTM">
    <molecule>Spike glycoprotein E1</molecule>
    <text evidence="3">Contains three N-linked oligosaccharides.</text>
</comment>
<comment type="PTM">
    <text evidence="1 3">Capsid is phosphorylated on Ser-46 by host. This phosphorylation negatively regulates capsid protein RNA-binding activity (By similarity). Dephosphorylated by human PP1A (By similarity).</text>
</comment>
<comment type="miscellaneous">
    <text evidence="3">Structural polyprotein: Translated from a subgenomic RNA synthesized during togaviruses replication.</text>
</comment>
<accession>Q99IE6</accession>
<sequence length="1063" mass="114754">MASTTPITMEDLQKALEAQSRALRAELAAGASQSRRPRPPRQRDSSTSGDDSGRDSGGPRRRRGNRGRGQLRDWSRAPPPPEERQESRSQTPAPKPSRAPPQQPQPPRMQTGRGGSAPRPELGPPTNPFQAAVARGLRPPLHDPDTEAPTEACVTSWLWSEGEGAVFYRVDLHFTNLGTPPLDEDGRWDPALMYNPCGPEPPAHVVRAYNQPAGDVRGVWGKGERTYAEQDFRVGGTRWHRLLRMPVRGLDGDSAPLPPHTTERIETRSARHPWRIRFGAPQAFLAGLLLAAVAVGTARAGLQPRADMAAPPTLPQPPRAHGQHYGHHHHQLPFLGHDGHHGGTLRVGQHHRNASDVLPGHWLQGGWGCYNLSDWHQGTHVCHTKHMDFWCVEHDRPPPATPTPFTTAANSTTAATPATAPAPCHAGLNDSCGGFLSGCGPMRLRHGADTRCGRLICGLSTTAQYPPTRFGCAMRWGLPPWELVVLTARPEDGWTCRGVPAHPGTRCPELVSPMGRATCSPASALWLATANALSLDHALAAFVLLVPWVLIFMVCRRACRRRGAAAALTAVVLQGYNPPAYGEEAFTYLCTAPGCATQTPVPVRLAGVRFESKIVDGGCFAPWDLEATGACICEIPTDVSCEGLGAWVPTAPCARIWNGTQRACTFWAVNAYSSGGYAQLASYFNPGGSYYKQYHPTACEVEPAFGHSDAACWGFPTDTVMSVFALASYVQHPHKTVRVKFHTETRTVWQLSVAGASCNVTTEHPFCNTPHGQLEVQVPPDPGDLVEYIMNYTGNQQSRWGLGSPNCHGPDWASPVCQRHSPDCSRLVGATPERPRLRLVDADDPLLRTAPGPGEVWVTPVIGSQARKCGLHIRAGPYGHATVEMPEWIRAHTTSDPWHPPGPLGLKFKTVRPVALPRALAPPRNVRVTGCYQCGTPALVEGLAPGGGNCHLTLNGEDVGAFPPGKFVTAALLNTPPPYQVSCGGESDRASARVIDPAAQSFTGVVYGTHTTAVSETRQTWAEWAAAHWWQLTLGAICALLLAGLLACCAKCLYYLRGAIAPR</sequence>
<organism>
    <name type="scientific">Rubella virus (strain TO-336 vaccine)</name>
    <name type="common">RUBV</name>
    <dbReference type="NCBI Taxonomy" id="376265"/>
    <lineage>
        <taxon>Viruses</taxon>
        <taxon>Riboviria</taxon>
        <taxon>Orthornavirae</taxon>
        <taxon>Kitrinoviricota</taxon>
        <taxon>Alsuviricetes</taxon>
        <taxon>Hepelivirales</taxon>
        <taxon>Matonaviridae</taxon>
        <taxon>Rubivirus</taxon>
        <taxon>Rubivirus rubellae</taxon>
    </lineage>
</organism>
<name>POLS_RUBVO</name>
<proteinExistence type="inferred from homology"/>
<evidence type="ECO:0000250" key="1"/>
<evidence type="ECO:0000250" key="2">
    <source>
        <dbReference type="UniProtKB" id="P07566"/>
    </source>
</evidence>
<evidence type="ECO:0000250" key="3">
    <source>
        <dbReference type="UniProtKB" id="P08563"/>
    </source>
</evidence>
<evidence type="ECO:0000255" key="4"/>
<evidence type="ECO:0000256" key="5">
    <source>
        <dbReference type="SAM" id="MobiDB-lite"/>
    </source>
</evidence>
<dbReference type="EMBL" id="AB047329">
    <property type="protein sequence ID" value="BAB32472.1"/>
    <property type="molecule type" value="Genomic_RNA"/>
</dbReference>
<dbReference type="SMR" id="Q99IE6"/>
<dbReference type="IntAct" id="Q99IE6">
    <property type="interactions" value="2"/>
</dbReference>
<dbReference type="Proteomes" id="UP000007187">
    <property type="component" value="Genome"/>
</dbReference>
<dbReference type="GO" id="GO:0044178">
    <property type="term" value="C:host cell Golgi membrane"/>
    <property type="evidence" value="ECO:0007669"/>
    <property type="project" value="UniProtKB-SubCell"/>
</dbReference>
<dbReference type="GO" id="GO:0033650">
    <property type="term" value="C:host cell mitochondrion"/>
    <property type="evidence" value="ECO:0007669"/>
    <property type="project" value="UniProtKB-SubCell"/>
</dbReference>
<dbReference type="GO" id="GO:0016020">
    <property type="term" value="C:membrane"/>
    <property type="evidence" value="ECO:0007669"/>
    <property type="project" value="UniProtKB-KW"/>
</dbReference>
<dbReference type="GO" id="GO:0039619">
    <property type="term" value="C:T=4 icosahedral viral capsid"/>
    <property type="evidence" value="ECO:0007669"/>
    <property type="project" value="UniProtKB-KW"/>
</dbReference>
<dbReference type="GO" id="GO:0019031">
    <property type="term" value="C:viral envelope"/>
    <property type="evidence" value="ECO:0007669"/>
    <property type="project" value="UniProtKB-KW"/>
</dbReference>
<dbReference type="GO" id="GO:0019013">
    <property type="term" value="C:viral nucleocapsid"/>
    <property type="evidence" value="ECO:0007669"/>
    <property type="project" value="InterPro"/>
</dbReference>
<dbReference type="GO" id="GO:0055036">
    <property type="term" value="C:virion membrane"/>
    <property type="evidence" value="ECO:0007669"/>
    <property type="project" value="UniProtKB-SubCell"/>
</dbReference>
<dbReference type="GO" id="GO:0046872">
    <property type="term" value="F:metal ion binding"/>
    <property type="evidence" value="ECO:0007669"/>
    <property type="project" value="UniProtKB-KW"/>
</dbReference>
<dbReference type="GO" id="GO:0003723">
    <property type="term" value="F:RNA binding"/>
    <property type="evidence" value="ECO:0007669"/>
    <property type="project" value="UniProtKB-KW"/>
</dbReference>
<dbReference type="GO" id="GO:0075512">
    <property type="term" value="P:clathrin-dependent endocytosis of virus by host cell"/>
    <property type="evidence" value="ECO:0007669"/>
    <property type="project" value="UniProtKB-KW"/>
</dbReference>
<dbReference type="GO" id="GO:0039654">
    <property type="term" value="P:fusion of virus membrane with host endosome membrane"/>
    <property type="evidence" value="ECO:0007669"/>
    <property type="project" value="UniProtKB-KW"/>
</dbReference>
<dbReference type="GO" id="GO:0019062">
    <property type="term" value="P:virion attachment to host cell"/>
    <property type="evidence" value="ECO:0007669"/>
    <property type="project" value="UniProtKB-KW"/>
</dbReference>
<dbReference type="Gene3D" id="2.60.98.30">
    <property type="entry name" value="Rubella membrane glycoprotein E1, domain 1"/>
    <property type="match status" value="1"/>
</dbReference>
<dbReference type="Gene3D" id="3.30.67.20">
    <property type="entry name" value="Rubella membrane glycoprotein E1, domain 2"/>
    <property type="match status" value="2"/>
</dbReference>
<dbReference type="Gene3D" id="2.60.40.2650">
    <property type="entry name" value="Rubella membrane glycoprotein E1, domain 3"/>
    <property type="match status" value="1"/>
</dbReference>
<dbReference type="Gene3D" id="3.10.50.50">
    <property type="entry name" value="Rubella virus capsid protein"/>
    <property type="match status" value="1"/>
</dbReference>
<dbReference type="InterPro" id="IPR008819">
    <property type="entry name" value="Rubella_Capsid"/>
</dbReference>
<dbReference type="InterPro" id="IPR043106">
    <property type="entry name" value="Rubella_Capsid_sf"/>
</dbReference>
<dbReference type="InterPro" id="IPR008820">
    <property type="entry name" value="Rubella_E1"/>
</dbReference>
<dbReference type="InterPro" id="IPR042500">
    <property type="entry name" value="Rubella_E1_1"/>
</dbReference>
<dbReference type="InterPro" id="IPR042498">
    <property type="entry name" value="Rubella_E1_2"/>
</dbReference>
<dbReference type="InterPro" id="IPR042499">
    <property type="entry name" value="Rubella_E1_3"/>
</dbReference>
<dbReference type="InterPro" id="IPR008821">
    <property type="entry name" value="Rubella_E2"/>
</dbReference>
<dbReference type="Pfam" id="PF05750">
    <property type="entry name" value="Rubella_Capsid"/>
    <property type="match status" value="1"/>
</dbReference>
<dbReference type="Pfam" id="PF05748">
    <property type="entry name" value="Rubella_E1"/>
    <property type="match status" value="1"/>
</dbReference>
<dbReference type="Pfam" id="PF05749">
    <property type="entry name" value="Rubella_E2"/>
    <property type="match status" value="1"/>
</dbReference>
<protein>
    <recommendedName>
        <fullName>Structural polyprotein</fullName>
    </recommendedName>
    <alternativeName>
        <fullName>p110</fullName>
    </alternativeName>
    <component>
        <recommendedName>
            <fullName>Capsid protein</fullName>
        </recommendedName>
        <alternativeName>
            <fullName>Coat protein</fullName>
            <shortName>C</shortName>
        </alternativeName>
    </component>
    <component>
        <recommendedName>
            <fullName>Spike glycoprotein E2</fullName>
        </recommendedName>
        <alternativeName>
            <fullName>E2 envelope glycoprotein</fullName>
        </alternativeName>
    </component>
    <component>
        <recommendedName>
            <fullName>Spike glycoprotein E1</fullName>
        </recommendedName>
        <alternativeName>
            <fullName>E1 envelope glycoprotein</fullName>
        </alternativeName>
    </component>
</protein>
<organismHost>
    <name type="scientific">Homo sapiens</name>
    <name type="common">Human</name>
    <dbReference type="NCBI Taxonomy" id="9606"/>
</organismHost>
<keyword id="KW-0106">Calcium</keyword>
<keyword id="KW-0167">Capsid protein</keyword>
<keyword id="KW-1165">Clathrin-mediated endocytosis of virus by host</keyword>
<keyword id="KW-1015">Disulfide bond</keyword>
<keyword id="KW-1170">Fusion of virus membrane with host endosomal membrane</keyword>
<keyword id="KW-1168">Fusion of virus membrane with host membrane</keyword>
<keyword id="KW-0325">Glycoprotein</keyword>
<keyword id="KW-1035">Host cytoplasm</keyword>
<keyword id="KW-1040">Host Golgi apparatus</keyword>
<keyword id="KW-1043">Host membrane</keyword>
<keyword id="KW-1045">Host mitochondrion</keyword>
<keyword id="KW-0945">Host-virus interaction</keyword>
<keyword id="KW-0449">Lipoprotein</keyword>
<keyword id="KW-0472">Membrane</keyword>
<keyword id="KW-0479">Metal-binding</keyword>
<keyword id="KW-0564">Palmitate</keyword>
<keyword id="KW-0597">Phosphoprotein</keyword>
<keyword id="KW-0694">RNA-binding</keyword>
<keyword id="KW-1144">T=4 icosahedral capsid protein</keyword>
<keyword id="KW-0812">Transmembrane</keyword>
<keyword id="KW-1133">Transmembrane helix</keyword>
<keyword id="KW-1161">Viral attachment to host cell</keyword>
<keyword id="KW-0261">Viral envelope protein</keyword>
<keyword id="KW-1162">Viral penetration into host cytoplasm</keyword>
<keyword id="KW-0946">Virion</keyword>
<keyword id="KW-1164">Virus endocytosis by host</keyword>
<keyword id="KW-1160">Virus entry into host cell</keyword>
<feature type="chain" id="PRO_0000238996" description="Capsid protein">
    <location>
        <begin position="1"/>
        <end position="300"/>
    </location>
</feature>
<feature type="chain" id="PRO_0000238997" description="Spike glycoprotein E2">
    <location>
        <begin position="301"/>
        <end position="582"/>
    </location>
</feature>
<feature type="chain" id="PRO_0000238998" description="Spike glycoprotein E1">
    <location>
        <begin position="583"/>
        <end position="1063"/>
    </location>
</feature>
<feature type="topological domain" description="Extracellular" evidence="4">
    <location>
        <begin position="301"/>
        <end position="534"/>
    </location>
</feature>
<feature type="transmembrane region" description="Helical; Note=Golgi retention signal" evidence="3">
    <location>
        <begin position="535"/>
        <end position="555"/>
    </location>
</feature>
<feature type="topological domain" description="Cytoplasmic" evidence="4">
    <location>
        <begin position="556"/>
        <end position="582"/>
    </location>
</feature>
<feature type="topological domain" description="Extracellular" evidence="4">
    <location>
        <begin position="583"/>
        <end position="1028"/>
    </location>
</feature>
<feature type="transmembrane region" description="Helical; Note=Endoplasmic reticulum retention signal" evidence="3">
    <location>
        <begin position="1029"/>
        <end position="1049"/>
    </location>
</feature>
<feature type="topological domain" description="Extracellular" evidence="4">
    <location>
        <begin position="1050"/>
        <end position="1063"/>
    </location>
</feature>
<feature type="region of interest" description="Disordered" evidence="5">
    <location>
        <begin position="1"/>
        <end position="131"/>
    </location>
</feature>
<feature type="region of interest" description="Human C1QBP/SF2P32-binding" evidence="1">
    <location>
        <begin position="30"/>
        <end position="69"/>
    </location>
</feature>
<feature type="region of interest" description="Functions as E2 signal peptide" evidence="3">
    <location>
        <begin position="279"/>
        <end position="300"/>
    </location>
</feature>
<feature type="region of interest" description="Functions as E1 signal peptide" evidence="3">
    <location>
        <begin position="563"/>
        <end position="582"/>
    </location>
</feature>
<feature type="compositionally biased region" description="Basic and acidic residues" evidence="5">
    <location>
        <begin position="70"/>
        <end position="87"/>
    </location>
</feature>
<feature type="compositionally biased region" description="Pro residues" evidence="5">
    <location>
        <begin position="93"/>
        <end position="107"/>
    </location>
</feature>
<feature type="binding site" evidence="3">
    <location>
        <position position="670"/>
    </location>
    <ligand>
        <name>Ca(2+)</name>
        <dbReference type="ChEBI" id="CHEBI:29108"/>
    </ligand>
</feature>
<feature type="binding site" evidence="3">
    <location>
        <position position="671"/>
    </location>
    <ligand>
        <name>Ca(2+)</name>
        <dbReference type="ChEBI" id="CHEBI:29108"/>
    </ligand>
</feature>
<feature type="binding site" evidence="3">
    <location>
        <position position="718"/>
    </location>
    <ligand>
        <name>Ca(2+)</name>
        <dbReference type="ChEBI" id="CHEBI:29108"/>
    </ligand>
</feature>
<feature type="binding site" evidence="3">
    <location>
        <position position="719"/>
    </location>
    <ligand>
        <name>Ca(2+)</name>
        <dbReference type="ChEBI" id="CHEBI:29108"/>
    </ligand>
</feature>
<feature type="site" description="Cleavage; by host signal peptidase" evidence="4">
    <location>
        <begin position="300"/>
        <end position="301"/>
    </location>
</feature>
<feature type="site" description="Cleavage; by host signal peptidase" evidence="4">
    <location>
        <begin position="582"/>
        <end position="583"/>
    </location>
</feature>
<feature type="modified residue" description="Phosphoserine; by host" evidence="3">
    <location>
        <position position="46"/>
    </location>
</feature>
<feature type="glycosylation site" description="N-linked (GlcNAc...) asparagine; by host" evidence="4">
    <location>
        <position position="353"/>
    </location>
</feature>
<feature type="glycosylation site" description="N-linked (GlcNAc...) asparagine; by host" evidence="4">
    <location>
        <position position="371"/>
    </location>
</feature>
<feature type="glycosylation site" description="N-linked (GlcNAc...) asparagine; by host" evidence="4">
    <location>
        <position position="410"/>
    </location>
</feature>
<feature type="glycosylation site" description="N-linked (GlcNAc...) asparagine; by host" evidence="4">
    <location>
        <position position="429"/>
    </location>
</feature>
<feature type="glycosylation site" description="N-linked (GlcNAc...) asparagine; by host" evidence="3">
    <location>
        <position position="658"/>
    </location>
</feature>
<feature type="glycosylation site" description="N-linked (GlcNAc...) asparagine; by host" evidence="3">
    <location>
        <position position="759"/>
    </location>
</feature>
<feature type="glycosylation site" description="N-linked (GlcNAc...) asparagine; by host" evidence="3">
    <location>
        <position position="791"/>
    </location>
</feature>
<feature type="glycosylation site" description="O-linked (GalNAc...) threonine; by host" evidence="3">
    <location>
        <position position="1011"/>
    </location>
</feature>
<feature type="glycosylation site" description="O-linked (GalNAc...) threonine; by host" evidence="3">
    <location>
        <position position="1012"/>
    </location>
</feature>
<feature type="disulfide bond" evidence="3">
    <location>
        <begin position="153"/>
        <end position="197"/>
    </location>
</feature>
<feature type="disulfide bond" evidence="2">
    <location>
        <begin position="590"/>
        <end position="595"/>
    </location>
</feature>
<feature type="disulfide bond" evidence="2">
    <location>
        <begin position="619"/>
        <end position="824"/>
    </location>
</feature>
<feature type="disulfide bond" evidence="2">
    <location>
        <begin position="641"/>
        <end position="653"/>
    </location>
</feature>
<feature type="disulfide bond" evidence="2">
    <location>
        <begin position="699"/>
        <end position="712"/>
    </location>
</feature>
<feature type="disulfide bond" evidence="2">
    <location>
        <begin position="758"/>
        <end position="767"/>
    </location>
</feature>
<feature type="disulfide bond" evidence="2">
    <location>
        <begin position="807"/>
        <end position="817"/>
    </location>
</feature>
<feature type="disulfide bond" evidence="2">
    <location>
        <begin position="931"/>
        <end position="934"/>
    </location>
</feature>
<feature type="disulfide bond" evidence="2">
    <location>
        <begin position="950"/>
        <end position="983"/>
    </location>
</feature>